<dbReference type="EC" id="1.1.1.103" evidence="1"/>
<dbReference type="EMBL" id="AJ248287">
    <property type="protein sequence ID" value="CAB50292.1"/>
    <property type="molecule type" value="Genomic_DNA"/>
</dbReference>
<dbReference type="EMBL" id="HE613800">
    <property type="protein sequence ID" value="CCE70830.1"/>
    <property type="molecule type" value="Genomic_DNA"/>
</dbReference>
<dbReference type="PIR" id="G75049">
    <property type="entry name" value="G75049"/>
</dbReference>
<dbReference type="RefSeq" id="WP_010868502.1">
    <property type="nucleotide sequence ID" value="NC_000868.1"/>
</dbReference>
<dbReference type="SMR" id="Q9UYX0"/>
<dbReference type="STRING" id="272844.PAB2382"/>
<dbReference type="KEGG" id="pab:PAB2382"/>
<dbReference type="PATRIC" id="fig|272844.11.peg.1474"/>
<dbReference type="eggNOG" id="arCOG01459">
    <property type="taxonomic scope" value="Archaea"/>
</dbReference>
<dbReference type="HOGENOM" id="CLU_026673_11_0_2"/>
<dbReference type="OrthoDB" id="73567at2157"/>
<dbReference type="PhylomeDB" id="Q9UYX0"/>
<dbReference type="UniPathway" id="UPA00046">
    <property type="reaction ID" value="UER00505"/>
</dbReference>
<dbReference type="Proteomes" id="UP000000810">
    <property type="component" value="Chromosome"/>
</dbReference>
<dbReference type="Proteomes" id="UP000009139">
    <property type="component" value="Chromosome"/>
</dbReference>
<dbReference type="GO" id="GO:0005737">
    <property type="term" value="C:cytoplasm"/>
    <property type="evidence" value="ECO:0007669"/>
    <property type="project" value="UniProtKB-SubCell"/>
</dbReference>
<dbReference type="GO" id="GO:0030554">
    <property type="term" value="F:adenyl nucleotide binding"/>
    <property type="evidence" value="ECO:0007669"/>
    <property type="project" value="UniProtKB-ARBA"/>
</dbReference>
<dbReference type="GO" id="GO:0043168">
    <property type="term" value="F:anion binding"/>
    <property type="evidence" value="ECO:0007669"/>
    <property type="project" value="UniProtKB-ARBA"/>
</dbReference>
<dbReference type="GO" id="GO:0008743">
    <property type="term" value="F:L-threonine 3-dehydrogenase activity"/>
    <property type="evidence" value="ECO:0007669"/>
    <property type="project" value="UniProtKB-UniRule"/>
</dbReference>
<dbReference type="GO" id="GO:0008270">
    <property type="term" value="F:zinc ion binding"/>
    <property type="evidence" value="ECO:0007669"/>
    <property type="project" value="UniProtKB-UniRule"/>
</dbReference>
<dbReference type="GO" id="GO:0019518">
    <property type="term" value="P:L-threonine catabolic process to glycine"/>
    <property type="evidence" value="ECO:0007669"/>
    <property type="project" value="UniProtKB-UniPathway"/>
</dbReference>
<dbReference type="GO" id="GO:0051262">
    <property type="term" value="P:protein tetramerization"/>
    <property type="evidence" value="ECO:0007669"/>
    <property type="project" value="UniProtKB-ARBA"/>
</dbReference>
<dbReference type="CDD" id="cd05281">
    <property type="entry name" value="TDH"/>
    <property type="match status" value="1"/>
</dbReference>
<dbReference type="FunFam" id="3.40.50.720:FF:000068">
    <property type="entry name" value="Sorbitol dehydrogenase"/>
    <property type="match status" value="1"/>
</dbReference>
<dbReference type="Gene3D" id="3.90.180.10">
    <property type="entry name" value="Medium-chain alcohol dehydrogenases, catalytic domain"/>
    <property type="match status" value="1"/>
</dbReference>
<dbReference type="Gene3D" id="3.40.50.720">
    <property type="entry name" value="NAD(P)-binding Rossmann-like Domain"/>
    <property type="match status" value="1"/>
</dbReference>
<dbReference type="HAMAP" id="MF_00627">
    <property type="entry name" value="Thr_dehydrog"/>
    <property type="match status" value="1"/>
</dbReference>
<dbReference type="InterPro" id="IPR013149">
    <property type="entry name" value="ADH-like_C"/>
</dbReference>
<dbReference type="InterPro" id="IPR013154">
    <property type="entry name" value="ADH-like_N"/>
</dbReference>
<dbReference type="InterPro" id="IPR002328">
    <property type="entry name" value="ADH_Zn_CS"/>
</dbReference>
<dbReference type="InterPro" id="IPR011032">
    <property type="entry name" value="GroES-like_sf"/>
</dbReference>
<dbReference type="InterPro" id="IPR004627">
    <property type="entry name" value="L-Threonine_3-DHase"/>
</dbReference>
<dbReference type="InterPro" id="IPR036291">
    <property type="entry name" value="NAD(P)-bd_dom_sf"/>
</dbReference>
<dbReference type="InterPro" id="IPR020843">
    <property type="entry name" value="PKS_ER"/>
</dbReference>
<dbReference type="InterPro" id="IPR050129">
    <property type="entry name" value="Zn_alcohol_dh"/>
</dbReference>
<dbReference type="NCBIfam" id="NF003808">
    <property type="entry name" value="PRK05396.1"/>
    <property type="match status" value="1"/>
</dbReference>
<dbReference type="NCBIfam" id="TIGR00692">
    <property type="entry name" value="tdh"/>
    <property type="match status" value="1"/>
</dbReference>
<dbReference type="PANTHER" id="PTHR43401">
    <property type="entry name" value="L-THREONINE 3-DEHYDROGENASE"/>
    <property type="match status" value="1"/>
</dbReference>
<dbReference type="PANTHER" id="PTHR43401:SF2">
    <property type="entry name" value="L-THREONINE 3-DEHYDROGENASE"/>
    <property type="match status" value="1"/>
</dbReference>
<dbReference type="Pfam" id="PF08240">
    <property type="entry name" value="ADH_N"/>
    <property type="match status" value="1"/>
</dbReference>
<dbReference type="Pfam" id="PF00107">
    <property type="entry name" value="ADH_zinc_N"/>
    <property type="match status" value="1"/>
</dbReference>
<dbReference type="SMART" id="SM00829">
    <property type="entry name" value="PKS_ER"/>
    <property type="match status" value="1"/>
</dbReference>
<dbReference type="SUPFAM" id="SSF50129">
    <property type="entry name" value="GroES-like"/>
    <property type="match status" value="1"/>
</dbReference>
<dbReference type="SUPFAM" id="SSF51735">
    <property type="entry name" value="NAD(P)-binding Rossmann-fold domains"/>
    <property type="match status" value="1"/>
</dbReference>
<dbReference type="PROSITE" id="PS00059">
    <property type="entry name" value="ADH_ZINC"/>
    <property type="match status" value="1"/>
</dbReference>
<gene>
    <name evidence="1" type="primary">tdh</name>
    <name type="ordered locus">PYRAB13870</name>
    <name type="ORF">PAB2382</name>
</gene>
<reference key="1">
    <citation type="journal article" date="2003" name="Mol. Microbiol.">
        <title>An integrated analysis of the genome of the hyperthermophilic archaeon Pyrococcus abyssi.</title>
        <authorList>
            <person name="Cohen G.N."/>
            <person name="Barbe V."/>
            <person name="Flament D."/>
            <person name="Galperin M."/>
            <person name="Heilig R."/>
            <person name="Lecompte O."/>
            <person name="Poch O."/>
            <person name="Prieur D."/>
            <person name="Querellou J."/>
            <person name="Ripp R."/>
            <person name="Thierry J.-C."/>
            <person name="Van der Oost J."/>
            <person name="Weissenbach J."/>
            <person name="Zivanovic Y."/>
            <person name="Forterre P."/>
        </authorList>
    </citation>
    <scope>NUCLEOTIDE SEQUENCE [LARGE SCALE GENOMIC DNA]</scope>
    <source>
        <strain>GE5 / Orsay</strain>
    </source>
</reference>
<reference key="2">
    <citation type="journal article" date="2012" name="Curr. Microbiol.">
        <title>Re-annotation of two hyperthermophilic archaea Pyrococcus abyssi GE5 and Pyrococcus furiosus DSM 3638.</title>
        <authorList>
            <person name="Gao J."/>
            <person name="Wang J."/>
        </authorList>
    </citation>
    <scope>GENOME REANNOTATION</scope>
    <source>
        <strain>GE5 / Orsay</strain>
    </source>
</reference>
<sequence>MSEKMVAIMKTKPAYGAELVEVDVPKPGPGEVLIKVIATSICGTDLHIYEWNEWAQSRIKPPQIMGHEVAGEVVEVGPGVEGIEVGDYVSVETHIVCGKCYACRRGQYHVCQNTKIFGVDTDGVFAEYAVVPAQNVWKNPKSIPPEYATLQEPLGNAVDTVLAGPISGKSVLITGAGPLGLLGIAVAKASGAYPVIVSEPSDFRRELAKKVGADYVINPFEEDVVKEVMDITDGNGVDVFLEFSGAPKALEQGLQAVTPAGRVSLLGLYPGKVSIDFNNLIIFKALTVYGITGRHLWETWYTVSRLLQSGKLNLDPIITHKYKGFDKYEEAFELMRAGKTGKVVFMLK</sequence>
<protein>
    <recommendedName>
        <fullName evidence="1">L-threonine 3-dehydrogenase</fullName>
        <shortName evidence="1">TDH</shortName>
        <ecNumber evidence="1">1.1.1.103</ecNumber>
    </recommendedName>
</protein>
<comment type="function">
    <text evidence="1">Catalyzes the NAD(+)-dependent oxidation of L-threonine to 2-amino-3-ketobutyrate.</text>
</comment>
<comment type="catalytic activity">
    <reaction evidence="1">
        <text>L-threonine + NAD(+) = (2S)-2-amino-3-oxobutanoate + NADH + H(+)</text>
        <dbReference type="Rhea" id="RHEA:13161"/>
        <dbReference type="ChEBI" id="CHEBI:15378"/>
        <dbReference type="ChEBI" id="CHEBI:57540"/>
        <dbReference type="ChEBI" id="CHEBI:57926"/>
        <dbReference type="ChEBI" id="CHEBI:57945"/>
        <dbReference type="ChEBI" id="CHEBI:78948"/>
        <dbReference type="EC" id="1.1.1.103"/>
    </reaction>
</comment>
<comment type="cofactor">
    <cofactor evidence="1">
        <name>Zn(2+)</name>
        <dbReference type="ChEBI" id="CHEBI:29105"/>
    </cofactor>
    <text evidence="1">Binds 2 Zn(2+) ions per subunit.</text>
</comment>
<comment type="pathway">
    <text evidence="1">Amino-acid degradation; L-threonine degradation via oxydo-reductase pathway; glycine from L-threonine: step 1/2.</text>
</comment>
<comment type="subunit">
    <text evidence="1">Homotetramer.</text>
</comment>
<comment type="subcellular location">
    <subcellularLocation>
        <location evidence="1">Cytoplasm</location>
    </subcellularLocation>
</comment>
<comment type="similarity">
    <text evidence="1">Belongs to the zinc-containing alcohol dehydrogenase family.</text>
</comment>
<organism>
    <name type="scientific">Pyrococcus abyssi (strain GE5 / Orsay)</name>
    <dbReference type="NCBI Taxonomy" id="272844"/>
    <lineage>
        <taxon>Archaea</taxon>
        <taxon>Methanobacteriati</taxon>
        <taxon>Methanobacteriota</taxon>
        <taxon>Thermococci</taxon>
        <taxon>Thermococcales</taxon>
        <taxon>Thermococcaceae</taxon>
        <taxon>Pyrococcus</taxon>
    </lineage>
</organism>
<feature type="chain" id="PRO_0000160875" description="L-threonine 3-dehydrogenase">
    <location>
        <begin position="1"/>
        <end position="348"/>
    </location>
</feature>
<feature type="active site" description="Charge relay system" evidence="1">
    <location>
        <position position="44"/>
    </location>
</feature>
<feature type="active site" description="Charge relay system" evidence="1">
    <location>
        <position position="47"/>
    </location>
</feature>
<feature type="binding site" evidence="1">
    <location>
        <position position="42"/>
    </location>
    <ligand>
        <name>Zn(2+)</name>
        <dbReference type="ChEBI" id="CHEBI:29105"/>
        <label>1</label>
        <note>catalytic</note>
    </ligand>
</feature>
<feature type="binding site" evidence="1">
    <location>
        <position position="67"/>
    </location>
    <ligand>
        <name>Zn(2+)</name>
        <dbReference type="ChEBI" id="CHEBI:29105"/>
        <label>1</label>
        <note>catalytic</note>
    </ligand>
</feature>
<feature type="binding site" evidence="1">
    <location>
        <position position="68"/>
    </location>
    <ligand>
        <name>Zn(2+)</name>
        <dbReference type="ChEBI" id="CHEBI:29105"/>
        <label>1</label>
        <note>catalytic</note>
    </ligand>
</feature>
<feature type="binding site" evidence="1">
    <location>
        <position position="97"/>
    </location>
    <ligand>
        <name>Zn(2+)</name>
        <dbReference type="ChEBI" id="CHEBI:29105"/>
        <label>2</label>
    </ligand>
</feature>
<feature type="binding site" evidence="1">
    <location>
        <position position="100"/>
    </location>
    <ligand>
        <name>Zn(2+)</name>
        <dbReference type="ChEBI" id="CHEBI:29105"/>
        <label>2</label>
    </ligand>
</feature>
<feature type="binding site" evidence="1">
    <location>
        <position position="103"/>
    </location>
    <ligand>
        <name>Zn(2+)</name>
        <dbReference type="ChEBI" id="CHEBI:29105"/>
        <label>2</label>
    </ligand>
</feature>
<feature type="binding site" evidence="1">
    <location>
        <position position="111"/>
    </location>
    <ligand>
        <name>Zn(2+)</name>
        <dbReference type="ChEBI" id="CHEBI:29105"/>
        <label>2</label>
    </ligand>
</feature>
<feature type="binding site" evidence="1">
    <location>
        <position position="179"/>
    </location>
    <ligand>
        <name>NAD(+)</name>
        <dbReference type="ChEBI" id="CHEBI:57540"/>
    </ligand>
</feature>
<feature type="binding site" evidence="1">
    <location>
        <position position="199"/>
    </location>
    <ligand>
        <name>NAD(+)</name>
        <dbReference type="ChEBI" id="CHEBI:57540"/>
    </ligand>
</feature>
<feature type="binding site" evidence="1">
    <location>
        <position position="204"/>
    </location>
    <ligand>
        <name>NAD(+)</name>
        <dbReference type="ChEBI" id="CHEBI:57540"/>
    </ligand>
</feature>
<feature type="binding site" evidence="1">
    <location>
        <begin position="266"/>
        <end position="268"/>
    </location>
    <ligand>
        <name>NAD(+)</name>
        <dbReference type="ChEBI" id="CHEBI:57540"/>
    </ligand>
</feature>
<feature type="binding site" evidence="1">
    <location>
        <begin position="291"/>
        <end position="292"/>
    </location>
    <ligand>
        <name>NAD(+)</name>
        <dbReference type="ChEBI" id="CHEBI:57540"/>
    </ligand>
</feature>
<feature type="site" description="Important for catalytic activity for the proton relay mechanism but does not participate directly in the coordination of zinc atom" evidence="1">
    <location>
        <position position="152"/>
    </location>
</feature>
<proteinExistence type="inferred from homology"/>
<name>TDH_PYRAB</name>
<accession>Q9UYX0</accession>
<accession>G8ZHJ3</accession>
<keyword id="KW-0963">Cytoplasm</keyword>
<keyword id="KW-0479">Metal-binding</keyword>
<keyword id="KW-0520">NAD</keyword>
<keyword id="KW-0560">Oxidoreductase</keyword>
<keyword id="KW-0862">Zinc</keyword>
<evidence type="ECO:0000255" key="1">
    <source>
        <dbReference type="HAMAP-Rule" id="MF_00627"/>
    </source>
</evidence>